<sequence>MATLIAARTKRKAPRVRIFEVRERGHTYVTKNVTVEDGACVYLRNVIPNGETKALNNPCVLSTCYAADRKVNSTLCPNIGVDEGCHVEWTPDGVYPNCCPKHVCPSATASS</sequence>
<proteinExistence type="evidence at protein level"/>
<reference evidence="6" key="1">
    <citation type="journal article" date="2015" name="J. Proteomics">
        <title>Sexual differences in the sialomes of the zebra tick, Rhipicephalus pulchellus.</title>
        <authorList>
            <person name="Tan A.W."/>
            <person name="Francischetti I.M."/>
            <person name="Slovak M."/>
            <person name="Kini R.M."/>
            <person name="Ribeiro J.M."/>
        </authorList>
    </citation>
    <scope>NUCLEOTIDE SEQUENCE [MRNA]</scope>
    <source>
        <tissue>Salivary gland</tissue>
    </source>
</reference>
<reference evidence="7 8" key="2">
    <citation type="journal article" date="2020" name="Proc. Natl. Acad. Sci. U.S.A.">
        <title>An inhibitor of complement C5 provides structural insights into activation.</title>
        <authorList>
            <person name="Reichhardt M.P."/>
            <person name="Johnson S."/>
            <person name="Tang T."/>
            <person name="Morgan T."/>
            <person name="Tebeka N."/>
            <person name="Popitsch N."/>
            <person name="Deme J.C."/>
            <person name="Jore M.M."/>
            <person name="Lea S.M."/>
        </authorList>
    </citation>
    <scope>X-RAY CRYSTALLOGRAPHY (2.70 ANGSTROMS) OF 20-111 IN COMPLEX WITH HUMAN COMPLEMENT C5 AND THE TICK COMPLEMENT INHBIBITORS OMCI AND RACI1</scope>
    <scope>STRUCTURE BY ELECTRON MICROSCOPY (3.5 ANGSTROMS) OF 24-105 IN COMPLEX WITH HUMAN COMPLEMENT C5</scope>
    <scope>FUNCTION</scope>
    <scope>DISULFIDE BONDS</scope>
    <scope>RECOMBINANT EXPRESSION</scope>
    <source>
        <tissue>Salivary gland</tissue>
    </source>
</reference>
<dbReference type="EMBL" id="GACK01003548">
    <property type="protein sequence ID" value="JAA61486.1"/>
    <property type="molecule type" value="mRNA"/>
</dbReference>
<dbReference type="PDB" id="6RPT">
    <property type="method" value="X-ray"/>
    <property type="resolution" value="2.70 A"/>
    <property type="chains" value="B/D/F=20-111"/>
</dbReference>
<dbReference type="PDB" id="6RQJ">
    <property type="method" value="EM"/>
    <property type="resolution" value="3.50 A"/>
    <property type="chains" value="E=24-105"/>
</dbReference>
<dbReference type="PDBsum" id="6RPT"/>
<dbReference type="PDBsum" id="6RQJ"/>
<dbReference type="EMDB" id="EMD-4983"/>
<dbReference type="SMR" id="L7MB58"/>
<dbReference type="GO" id="GO:0005576">
    <property type="term" value="C:extracellular region"/>
    <property type="evidence" value="ECO:0007669"/>
    <property type="project" value="UniProtKB-SubCell"/>
</dbReference>
<dbReference type="InterPro" id="IPR029277">
    <property type="entry name" value="SVWC_dom"/>
</dbReference>
<dbReference type="Pfam" id="PF15430">
    <property type="entry name" value="SVWC"/>
    <property type="match status" value="1"/>
</dbReference>
<dbReference type="SMART" id="SM01318">
    <property type="entry name" value="SVWC"/>
    <property type="match status" value="1"/>
</dbReference>
<organism>
    <name type="scientific">Rhipicephalus pulchellus</name>
    <name type="common">Yellow backed tick</name>
    <name type="synonym">Dermacentor pulchellus</name>
    <dbReference type="NCBI Taxonomy" id="72859"/>
    <lineage>
        <taxon>Eukaryota</taxon>
        <taxon>Metazoa</taxon>
        <taxon>Ecdysozoa</taxon>
        <taxon>Arthropoda</taxon>
        <taxon>Chelicerata</taxon>
        <taxon>Arachnida</taxon>
        <taxon>Acari</taxon>
        <taxon>Parasitiformes</taxon>
        <taxon>Ixodida</taxon>
        <taxon>Ixodoidea</taxon>
        <taxon>Ixodidae</taxon>
        <taxon>Rhipicephalinae</taxon>
        <taxon>Rhipicephalus</taxon>
        <taxon>Rhipicephalus</taxon>
    </lineage>
</organism>
<keyword id="KW-0002">3D-structure</keyword>
<keyword id="KW-1015">Disulfide bond</keyword>
<keyword id="KW-0964">Secreted</keyword>
<keyword id="KW-0732">Signal</keyword>
<name>C5IT1_RHIPC</name>
<evidence type="ECO:0000250" key="1">
    <source>
        <dbReference type="UniProtKB" id="P0DQV1"/>
    </source>
</evidence>
<evidence type="ECO:0000269" key="2">
    <source>
    </source>
</evidence>
<evidence type="ECO:0000303" key="3">
    <source>
    </source>
</evidence>
<evidence type="ECO:0000305" key="4"/>
<evidence type="ECO:0000305" key="5">
    <source>
    </source>
</evidence>
<evidence type="ECO:0000312" key="6">
    <source>
        <dbReference type="EMBL" id="JAA61486.1"/>
    </source>
</evidence>
<evidence type="ECO:0007744" key="7">
    <source>
        <dbReference type="PDB" id="6RPT"/>
    </source>
</evidence>
<evidence type="ECO:0007744" key="8">
    <source>
        <dbReference type="PDB" id="6RQJ"/>
    </source>
</evidence>
<evidence type="ECO:0007829" key="9">
    <source>
        <dbReference type="PDB" id="6RPT"/>
    </source>
</evidence>
<feature type="signal peptide" evidence="1">
    <location>
        <begin position="1"/>
        <end position="19"/>
    </location>
</feature>
<feature type="chain" id="PRO_0000456232" description="Complement inhibitor CirpT1">
    <location>
        <begin position="20"/>
        <end position="111"/>
    </location>
</feature>
<feature type="disulfide bond" evidence="2 7 8">
    <location>
        <begin position="40"/>
        <end position="64"/>
    </location>
</feature>
<feature type="disulfide bond" evidence="2 7 8">
    <location>
        <begin position="59"/>
        <end position="98"/>
    </location>
</feature>
<feature type="disulfide bond" evidence="2 7 8">
    <location>
        <begin position="76"/>
        <end position="99"/>
    </location>
</feature>
<feature type="disulfide bond" evidence="2 7 8">
    <location>
        <begin position="85"/>
        <end position="104"/>
    </location>
</feature>
<feature type="unsure residue" evidence="4">
    <location>
        <position position="1"/>
    </location>
</feature>
<feature type="sequence conflict" description="In Ref. 2." evidence="4" ref="2">
    <original>EVR</original>
    <variation>DVQ</variation>
    <location>
        <begin position="20"/>
        <end position="22"/>
    </location>
</feature>
<feature type="strand" evidence="9">
    <location>
        <begin position="27"/>
        <end position="32"/>
    </location>
</feature>
<feature type="strand" evidence="9">
    <location>
        <begin position="34"/>
        <end position="36"/>
    </location>
</feature>
<feature type="strand" evidence="9">
    <location>
        <begin position="39"/>
        <end position="42"/>
    </location>
</feature>
<feature type="strand" evidence="9">
    <location>
        <begin position="45"/>
        <end position="48"/>
    </location>
</feature>
<feature type="strand" evidence="9">
    <location>
        <begin position="52"/>
        <end position="54"/>
    </location>
</feature>
<feature type="strand" evidence="9">
    <location>
        <begin position="56"/>
        <end position="58"/>
    </location>
</feature>
<feature type="strand" evidence="9">
    <location>
        <begin position="60"/>
        <end position="65"/>
    </location>
</feature>
<feature type="turn" evidence="9">
    <location>
        <begin position="66"/>
        <end position="69"/>
    </location>
</feature>
<feature type="strand" evidence="9">
    <location>
        <begin position="70"/>
        <end position="74"/>
    </location>
</feature>
<feature type="strand" evidence="9">
    <location>
        <begin position="86"/>
        <end position="89"/>
    </location>
</feature>
<feature type="turn" evidence="9">
    <location>
        <begin position="95"/>
        <end position="98"/>
    </location>
</feature>
<feature type="strand" evidence="9">
    <location>
        <begin position="101"/>
        <end position="103"/>
    </location>
</feature>
<protein>
    <recommendedName>
        <fullName evidence="3">Complement inhibitor CirpT1</fullName>
    </recommendedName>
    <alternativeName>
        <fullName evidence="3">Complement inhibitor from Rhipicephalus pulchellus of the terminal pathway 1</fullName>
    </alternativeName>
</protein>
<accession>L7MB58</accession>
<comment type="function">
    <text evidence="2">Complement inhibitor (PubMed:31871188). Prevents complement-mediated activation of C5 by sterically preventing direct binding of C5 to its convertase (binding with domains MG4 and MG5) (PubMed:31871188). Binds C5 at a different binding site than the other tick complement inhibitors OmCI and RaCI3, and the drug eculizumab (PubMed:31871188). Inhibits the complement in human, rat and guinea pig, and also shows a reduced inhibition in rabbit and pig (PubMed:31871188).</text>
</comment>
<comment type="subcellular location">
    <subcellularLocation>
        <location evidence="5">Secreted</location>
    </subcellularLocation>
</comment>
<comment type="tissue specificity">
    <text evidence="5">Expressed in salivary glands.</text>
</comment>
<comment type="similarity">
    <text evidence="4">Belongs to the CirpT family.</text>
</comment>